<sequence>MNLQHHFLIAMPALQDPIFRRSVVYICEHNQDGAMGIIVNKPLENLQIEGILEKLKITPEPRDSSIRLDKAVMLGGPLAEDRGFILHTPPSRFASSIRISDNTVITTSRDVLETLGTQQQPSDVLVALGYASWDKGQLEQELLDNAWLTAPADLNILFKTPIAERWREAAKLIGIDILTMPGVAGHA</sequence>
<reference key="1">
    <citation type="journal article" date="2011" name="J. Bacteriol.">
        <title>Comparative genomics of 28 Salmonella enterica isolates: evidence for CRISPR-mediated adaptive sublineage evolution.</title>
        <authorList>
            <person name="Fricke W.F."/>
            <person name="Mammel M.K."/>
            <person name="McDermott P.F."/>
            <person name="Tartera C."/>
            <person name="White D.G."/>
            <person name="Leclerc J.E."/>
            <person name="Ravel J."/>
            <person name="Cebula T.A."/>
        </authorList>
    </citation>
    <scope>NUCLEOTIDE SEQUENCE [LARGE SCALE GENOMIC DNA]</scope>
    <source>
        <strain>CT_02021853</strain>
    </source>
</reference>
<proteinExistence type="inferred from homology"/>
<feature type="chain" id="PRO_1000198292" description="UPF0301 protein YqgE">
    <location>
        <begin position="1"/>
        <end position="187"/>
    </location>
</feature>
<organism>
    <name type="scientific">Salmonella dublin (strain CT_02021853)</name>
    <dbReference type="NCBI Taxonomy" id="439851"/>
    <lineage>
        <taxon>Bacteria</taxon>
        <taxon>Pseudomonadati</taxon>
        <taxon>Pseudomonadota</taxon>
        <taxon>Gammaproteobacteria</taxon>
        <taxon>Enterobacterales</taxon>
        <taxon>Enterobacteriaceae</taxon>
        <taxon>Salmonella</taxon>
    </lineage>
</organism>
<comment type="similarity">
    <text evidence="1">Belongs to the UPF0301 (AlgH) family.</text>
</comment>
<evidence type="ECO:0000255" key="1">
    <source>
        <dbReference type="HAMAP-Rule" id="MF_00758"/>
    </source>
</evidence>
<protein>
    <recommendedName>
        <fullName evidence="1">UPF0301 protein YqgE</fullName>
    </recommendedName>
</protein>
<gene>
    <name evidence="1" type="primary">yqgE</name>
    <name type="ordered locus">SeD_A3439</name>
</gene>
<name>YQGE_SALDC</name>
<accession>B5FUV9</accession>
<dbReference type="EMBL" id="CP001144">
    <property type="protein sequence ID" value="ACH76377.1"/>
    <property type="molecule type" value="Genomic_DNA"/>
</dbReference>
<dbReference type="RefSeq" id="WP_001053173.1">
    <property type="nucleotide sequence ID" value="NC_011205.1"/>
</dbReference>
<dbReference type="SMR" id="B5FUV9"/>
<dbReference type="KEGG" id="sed:SeD_A3439"/>
<dbReference type="HOGENOM" id="CLU_057596_1_0_6"/>
<dbReference type="Proteomes" id="UP000008322">
    <property type="component" value="Chromosome"/>
</dbReference>
<dbReference type="GO" id="GO:0005829">
    <property type="term" value="C:cytosol"/>
    <property type="evidence" value="ECO:0007669"/>
    <property type="project" value="TreeGrafter"/>
</dbReference>
<dbReference type="FunFam" id="3.30.70.1300:FF:000001">
    <property type="entry name" value="UPF0301 protein YqgE"/>
    <property type="match status" value="1"/>
</dbReference>
<dbReference type="Gene3D" id="3.40.1740.10">
    <property type="entry name" value="VC0467-like"/>
    <property type="match status" value="1"/>
</dbReference>
<dbReference type="Gene3D" id="3.30.70.1300">
    <property type="entry name" value="VC0467-like domains"/>
    <property type="match status" value="1"/>
</dbReference>
<dbReference type="HAMAP" id="MF_00758">
    <property type="entry name" value="UPF0301"/>
    <property type="match status" value="1"/>
</dbReference>
<dbReference type="InterPro" id="IPR003774">
    <property type="entry name" value="AlgH-like"/>
</dbReference>
<dbReference type="NCBIfam" id="NF001266">
    <property type="entry name" value="PRK00228.1-1"/>
    <property type="match status" value="1"/>
</dbReference>
<dbReference type="PANTHER" id="PTHR30327">
    <property type="entry name" value="UNCHARACTERIZED PROTEIN YQGE"/>
    <property type="match status" value="1"/>
</dbReference>
<dbReference type="PANTHER" id="PTHR30327:SF1">
    <property type="entry name" value="UPF0301 PROTEIN YQGE"/>
    <property type="match status" value="1"/>
</dbReference>
<dbReference type="Pfam" id="PF02622">
    <property type="entry name" value="DUF179"/>
    <property type="match status" value="1"/>
</dbReference>
<dbReference type="SUPFAM" id="SSF143456">
    <property type="entry name" value="VC0467-like"/>
    <property type="match status" value="1"/>
</dbReference>